<keyword id="KW-0418">Kinase</keyword>
<keyword id="KW-0547">Nucleotide-binding</keyword>
<keyword id="KW-0723">Serine/threonine-protein kinase</keyword>
<keyword id="KW-0808">Transferase</keyword>
<organism>
    <name type="scientific">Wolbachia pipientis wMel</name>
    <dbReference type="NCBI Taxonomy" id="163164"/>
    <lineage>
        <taxon>Bacteria</taxon>
        <taxon>Pseudomonadati</taxon>
        <taxon>Pseudomonadota</taxon>
        <taxon>Alphaproteobacteria</taxon>
        <taxon>Rickettsiales</taxon>
        <taxon>Anaplasmataceae</taxon>
        <taxon>Wolbachieae</taxon>
        <taxon>Wolbachia</taxon>
    </lineage>
</organism>
<sequence>MTLKKLNLHLVSDSSGETVISVAKSALKHFRSVETIEYVWSFVKGEEQIDKILEEINRKSDEHNFVICTITDDELRKYLKDNCIKLKIPYRAILSHIIREISSYLEIEKDEKLDLHTEINNEYFQRIEAINYTINHDDGQNIQDIDKADIILVGVSRTSKSPTSTYLAYRGYKVANIPFVSGVPFYVDLAKLKNKLTIGVTIDVSRLIEIRKNRLTSINNEDNNIYANPEKVEKEIKEAEELFKQNNWPIIDVTQKSIEEVSATIIQYFNKMLSID</sequence>
<proteinExistence type="inferred from homology"/>
<reference key="1">
    <citation type="journal article" date="2004" name="PLoS Biol.">
        <title>Phylogenomics of the reproductive parasite Wolbachia pipientis wMel: a streamlined genome overrun by mobile genetic elements.</title>
        <authorList>
            <person name="Wu M."/>
            <person name="Sun L.V."/>
            <person name="Vamathevan J.J."/>
            <person name="Riegler M."/>
            <person name="DeBoy R.T."/>
            <person name="Brownlie J.C."/>
            <person name="McGraw E.A."/>
            <person name="Martin W."/>
            <person name="Esser C."/>
            <person name="Ahmadinejad N."/>
            <person name="Wiegand C."/>
            <person name="Madupu R."/>
            <person name="Beanan M.J."/>
            <person name="Brinkac L.M."/>
            <person name="Daugherty S.C."/>
            <person name="Durkin A.S."/>
            <person name="Kolonay J.F."/>
            <person name="Nelson W.C."/>
            <person name="Mohamoud Y."/>
            <person name="Lee P."/>
            <person name="Berry K.J."/>
            <person name="Young M.B."/>
            <person name="Utterback T.R."/>
            <person name="Weidman J.F."/>
            <person name="Nierman W.C."/>
            <person name="Paulsen I.T."/>
            <person name="Nelson K.E."/>
            <person name="Tettelin H."/>
            <person name="O'Neill S.L."/>
            <person name="Eisen J.A."/>
        </authorList>
    </citation>
    <scope>NUCLEOTIDE SEQUENCE [LARGE SCALE GENOMIC DNA]</scope>
</reference>
<dbReference type="EC" id="2.7.11.32" evidence="1"/>
<dbReference type="EC" id="2.7.4.27" evidence="1"/>
<dbReference type="EMBL" id="AE017196">
    <property type="protein sequence ID" value="AAS14071.1"/>
    <property type="molecule type" value="Genomic_DNA"/>
</dbReference>
<dbReference type="RefSeq" id="WP_006280267.1">
    <property type="nucleotide sequence ID" value="NZ_OX384529.1"/>
</dbReference>
<dbReference type="SMR" id="Q73I41"/>
<dbReference type="EnsemblBacteria" id="AAS14071">
    <property type="protein sequence ID" value="AAS14071"/>
    <property type="gene ID" value="WD_0341"/>
</dbReference>
<dbReference type="KEGG" id="wol:WD_0341"/>
<dbReference type="eggNOG" id="COG1806">
    <property type="taxonomic scope" value="Bacteria"/>
</dbReference>
<dbReference type="Proteomes" id="UP000008215">
    <property type="component" value="Chromosome"/>
</dbReference>
<dbReference type="GO" id="GO:0043531">
    <property type="term" value="F:ADP binding"/>
    <property type="evidence" value="ECO:0007669"/>
    <property type="project" value="UniProtKB-UniRule"/>
</dbReference>
<dbReference type="GO" id="GO:0005524">
    <property type="term" value="F:ATP binding"/>
    <property type="evidence" value="ECO:0007669"/>
    <property type="project" value="InterPro"/>
</dbReference>
<dbReference type="GO" id="GO:0016776">
    <property type="term" value="F:phosphotransferase activity, phosphate group as acceptor"/>
    <property type="evidence" value="ECO:0007669"/>
    <property type="project" value="UniProtKB-UniRule"/>
</dbReference>
<dbReference type="GO" id="GO:0004674">
    <property type="term" value="F:protein serine/threonine kinase activity"/>
    <property type="evidence" value="ECO:0007669"/>
    <property type="project" value="UniProtKB-UniRule"/>
</dbReference>
<dbReference type="Gene3D" id="3.40.50.300">
    <property type="entry name" value="P-loop containing nucleotide triphosphate hydrolases"/>
    <property type="match status" value="1"/>
</dbReference>
<dbReference type="HAMAP" id="MF_00921">
    <property type="entry name" value="PDRP"/>
    <property type="match status" value="1"/>
</dbReference>
<dbReference type="InterPro" id="IPR005177">
    <property type="entry name" value="Kinase-pyrophosphorylase"/>
</dbReference>
<dbReference type="InterPro" id="IPR027417">
    <property type="entry name" value="P-loop_NTPase"/>
</dbReference>
<dbReference type="InterPro" id="IPR026565">
    <property type="entry name" value="PPDK_reg"/>
</dbReference>
<dbReference type="NCBIfam" id="NF003742">
    <property type="entry name" value="PRK05339.1"/>
    <property type="match status" value="1"/>
</dbReference>
<dbReference type="PANTHER" id="PTHR31756">
    <property type="entry name" value="PYRUVATE, PHOSPHATE DIKINASE REGULATORY PROTEIN 1, CHLOROPLASTIC"/>
    <property type="match status" value="1"/>
</dbReference>
<dbReference type="PANTHER" id="PTHR31756:SF3">
    <property type="entry name" value="PYRUVATE, PHOSPHATE DIKINASE REGULATORY PROTEIN 1, CHLOROPLASTIC"/>
    <property type="match status" value="1"/>
</dbReference>
<dbReference type="Pfam" id="PF03618">
    <property type="entry name" value="Kinase-PPPase"/>
    <property type="match status" value="1"/>
</dbReference>
<feature type="chain" id="PRO_0000196740" description="Putative pyruvate, phosphate dikinase regulatory protein">
    <location>
        <begin position="1"/>
        <end position="276"/>
    </location>
</feature>
<feature type="binding site" evidence="1">
    <location>
        <begin position="154"/>
        <end position="161"/>
    </location>
    <ligand>
        <name>ADP</name>
        <dbReference type="ChEBI" id="CHEBI:456216"/>
    </ligand>
</feature>
<protein>
    <recommendedName>
        <fullName evidence="1">Putative pyruvate, phosphate dikinase regulatory protein</fullName>
        <shortName evidence="1">PPDK regulatory protein</shortName>
        <ecNumber evidence="1">2.7.11.32</ecNumber>
        <ecNumber evidence="1">2.7.4.27</ecNumber>
    </recommendedName>
</protein>
<accession>Q73I41</accession>
<evidence type="ECO:0000255" key="1">
    <source>
        <dbReference type="HAMAP-Rule" id="MF_00921"/>
    </source>
</evidence>
<gene>
    <name type="ordered locus">WD_0341</name>
</gene>
<name>PDRP_WOLPM</name>
<comment type="function">
    <text evidence="1">Bifunctional serine/threonine kinase and phosphorylase involved in the regulation of the pyruvate, phosphate dikinase (PPDK) by catalyzing its phosphorylation/dephosphorylation.</text>
</comment>
<comment type="catalytic activity">
    <reaction evidence="1">
        <text>N(tele)-phospho-L-histidyl/L-threonyl-[pyruvate, phosphate dikinase] + ADP = N(tele)-phospho-L-histidyl/O-phospho-L-threonyl-[pyruvate, phosphate dikinase] + AMP + H(+)</text>
        <dbReference type="Rhea" id="RHEA:43692"/>
        <dbReference type="Rhea" id="RHEA-COMP:10650"/>
        <dbReference type="Rhea" id="RHEA-COMP:10651"/>
        <dbReference type="ChEBI" id="CHEBI:15378"/>
        <dbReference type="ChEBI" id="CHEBI:30013"/>
        <dbReference type="ChEBI" id="CHEBI:61977"/>
        <dbReference type="ChEBI" id="CHEBI:83586"/>
        <dbReference type="ChEBI" id="CHEBI:456215"/>
        <dbReference type="ChEBI" id="CHEBI:456216"/>
        <dbReference type="EC" id="2.7.11.32"/>
    </reaction>
</comment>
<comment type="catalytic activity">
    <reaction evidence="1">
        <text>N(tele)-phospho-L-histidyl/O-phospho-L-threonyl-[pyruvate, phosphate dikinase] + phosphate + H(+) = N(tele)-phospho-L-histidyl/L-threonyl-[pyruvate, phosphate dikinase] + diphosphate</text>
        <dbReference type="Rhea" id="RHEA:43696"/>
        <dbReference type="Rhea" id="RHEA-COMP:10650"/>
        <dbReference type="Rhea" id="RHEA-COMP:10651"/>
        <dbReference type="ChEBI" id="CHEBI:15378"/>
        <dbReference type="ChEBI" id="CHEBI:30013"/>
        <dbReference type="ChEBI" id="CHEBI:33019"/>
        <dbReference type="ChEBI" id="CHEBI:43474"/>
        <dbReference type="ChEBI" id="CHEBI:61977"/>
        <dbReference type="ChEBI" id="CHEBI:83586"/>
        <dbReference type="EC" id="2.7.4.27"/>
    </reaction>
</comment>
<comment type="similarity">
    <text evidence="1">Belongs to the pyruvate, phosphate/water dikinase regulatory protein family. PDRP subfamily.</text>
</comment>